<reference key="1">
    <citation type="journal article" date="2005" name="Plant Cell">
        <title>Crown rootless1, which is essential for crown root formation in rice, is a target of an AUXIN RESPONSE FACTOR in auxin signaling.</title>
        <authorList>
            <person name="Inukai Y."/>
            <person name="Sakamoto T."/>
            <person name="Ueguchi-Tanaka M."/>
            <person name="Shibata Y."/>
            <person name="Gomi K."/>
            <person name="Umemura I."/>
            <person name="Hasegawa Y."/>
            <person name="Ashikari M."/>
            <person name="Kitano H."/>
            <person name="Matsuoka M."/>
        </authorList>
    </citation>
    <scope>NUCLEOTIDE SEQUENCE [MRNA]</scope>
    <scope>FUNCTION</scope>
    <scope>TISSUE SPECIFICITY</scope>
    <scope>INDUCTION BY AUXIN</scope>
    <scope>DISRUPTION PHENOTYPE</scope>
    <source>
        <strain>cv. Nipponbare</strain>
    </source>
</reference>
<reference key="2">
    <citation type="journal article" date="2005" name="Plant J.">
        <title>ARL1, a LOB-domain protein required for adventitious root formation in rice.</title>
        <authorList>
            <person name="Liu H."/>
            <person name="Wang S."/>
            <person name="Yu X."/>
            <person name="Yu J."/>
            <person name="He X."/>
            <person name="Zhang S."/>
            <person name="Shou H."/>
            <person name="Wu P."/>
        </authorList>
    </citation>
    <scope>NUCLEOTIDE SEQUENCE [MRNA]</scope>
    <scope>FUNCTION</scope>
    <scope>SUBUNIT</scope>
    <scope>HOMODIMERIZATION</scope>
    <scope>SUBCELLULAR LOCATION</scope>
    <scope>TISSUE SPECIFICITY</scope>
    <scope>INDUCTION</scope>
    <scope>DISRUPTION PHENOTYPE</scope>
</reference>
<reference key="3">
    <citation type="journal article" date="2005" name="Genome Res.">
        <title>Sequence, annotation, and analysis of synteny between rice chromosome 3 and diverged grass species.</title>
        <authorList>
            <consortium name="The rice chromosome 3 sequencing consortium"/>
            <person name="Buell C.R."/>
            <person name="Yuan Q."/>
            <person name="Ouyang S."/>
            <person name="Liu J."/>
            <person name="Zhu W."/>
            <person name="Wang A."/>
            <person name="Maiti R."/>
            <person name="Haas B."/>
            <person name="Wortman J."/>
            <person name="Pertea M."/>
            <person name="Jones K.M."/>
            <person name="Kim M."/>
            <person name="Overton L."/>
            <person name="Tsitrin T."/>
            <person name="Fadrosh D."/>
            <person name="Bera J."/>
            <person name="Weaver B."/>
            <person name="Jin S."/>
            <person name="Johri S."/>
            <person name="Reardon M."/>
            <person name="Webb K."/>
            <person name="Hill J."/>
            <person name="Moffat K."/>
            <person name="Tallon L."/>
            <person name="Van Aken S."/>
            <person name="Lewis M."/>
            <person name="Utterback T."/>
            <person name="Feldblyum T."/>
            <person name="Zismann V."/>
            <person name="Iobst S."/>
            <person name="Hsiao J."/>
            <person name="de Vazeille A.R."/>
            <person name="Salzberg S.L."/>
            <person name="White O."/>
            <person name="Fraser C.M."/>
            <person name="Yu Y."/>
            <person name="Kim H."/>
            <person name="Rambo T."/>
            <person name="Currie J."/>
            <person name="Collura K."/>
            <person name="Kernodle-Thompson S."/>
            <person name="Wei F."/>
            <person name="Kudrna K."/>
            <person name="Ammiraju J.S.S."/>
            <person name="Luo M."/>
            <person name="Goicoechea J.L."/>
            <person name="Wing R.A."/>
            <person name="Henry D."/>
            <person name="Oates R."/>
            <person name="Palmer M."/>
            <person name="Pries G."/>
            <person name="Saski C."/>
            <person name="Simmons J."/>
            <person name="Soderlund C."/>
            <person name="Nelson W."/>
            <person name="de la Bastide M."/>
            <person name="Spiegel L."/>
            <person name="Nascimento L."/>
            <person name="Huang E."/>
            <person name="Preston R."/>
            <person name="Zutavern T."/>
            <person name="Palmer L."/>
            <person name="O'Shaughnessy A."/>
            <person name="Dike S."/>
            <person name="McCombie W.R."/>
            <person name="Minx P."/>
            <person name="Cordum H."/>
            <person name="Wilson R."/>
            <person name="Jin W."/>
            <person name="Lee H.R."/>
            <person name="Jiang J."/>
            <person name="Jackson S."/>
        </authorList>
    </citation>
    <scope>NUCLEOTIDE SEQUENCE [LARGE SCALE GENOMIC DNA]</scope>
    <source>
        <strain>cv. Nipponbare</strain>
    </source>
</reference>
<reference key="4">
    <citation type="journal article" date="2005" name="Nature">
        <title>The map-based sequence of the rice genome.</title>
        <authorList>
            <consortium name="International rice genome sequencing project (IRGSP)"/>
        </authorList>
    </citation>
    <scope>NUCLEOTIDE SEQUENCE [LARGE SCALE GENOMIC DNA]</scope>
    <source>
        <strain>cv. Nipponbare</strain>
    </source>
</reference>
<reference key="5">
    <citation type="journal article" date="2008" name="Nucleic Acids Res.">
        <title>The rice annotation project database (RAP-DB): 2008 update.</title>
        <authorList>
            <consortium name="The rice annotation project (RAP)"/>
        </authorList>
    </citation>
    <scope>GENOME REANNOTATION</scope>
    <source>
        <strain>cv. Nipponbare</strain>
    </source>
</reference>
<reference key="6">
    <citation type="journal article" date="2013" name="Rice">
        <title>Improvement of the Oryza sativa Nipponbare reference genome using next generation sequence and optical map data.</title>
        <authorList>
            <person name="Kawahara Y."/>
            <person name="de la Bastide M."/>
            <person name="Hamilton J.P."/>
            <person name="Kanamori H."/>
            <person name="McCombie W.R."/>
            <person name="Ouyang S."/>
            <person name="Schwartz D.C."/>
            <person name="Tanaka T."/>
            <person name="Wu J."/>
            <person name="Zhou S."/>
            <person name="Childs K.L."/>
            <person name="Davidson R.M."/>
            <person name="Lin H."/>
            <person name="Quesada-Ocampo L."/>
            <person name="Vaillancourt B."/>
            <person name="Sakai H."/>
            <person name="Lee S.S."/>
            <person name="Kim J."/>
            <person name="Numa H."/>
            <person name="Itoh T."/>
            <person name="Buell C.R."/>
            <person name="Matsumoto T."/>
        </authorList>
    </citation>
    <scope>GENOME REANNOTATION</scope>
    <source>
        <strain>cv. Nipponbare</strain>
    </source>
</reference>
<reference key="7">
    <citation type="journal article" date="2011" name="BMC Genomics">
        <title>Transcript profiling of crown rootless1 mutant stem base reveals new elements associated with crown root development in rice.</title>
        <authorList>
            <person name="Coudert Y."/>
            <person name="Bes M."/>
            <person name="Le T.V."/>
            <person name="Pre M."/>
            <person name="Guiderdoni E."/>
            <person name="Gantet P."/>
        </authorList>
    </citation>
    <scope>FUNCTION</scope>
</reference>
<sequence length="259" mass="26737">MTGFGSPCGACKFLRRKCVRGCVFAPYFCHEQGAAHFAAIHKVFGASNVSKLLAHLPLADRPEAAVTISYEAQARLRDPIYGCVAHIFALQQQVMTLQAQLASLKAAAAQGIHHQDVGATTKGGYMSAAATAADDQLGYGGYNQWCGSNGGGAPAASQPGAYSSNGGAGHGHDSITALLAAGSDYMQHSLYHAFEHSEGAGAVDDGHAAAAAFEAAAESSSCGMAASFAADESVWRSSSSGYQDCEDLQSVAYAYLNRS</sequence>
<comment type="function">
    <text evidence="2 3 4">Acts as a positive regulator of adventitious (crown) root formation by promoting its initiation (PubMed:15829602, PubMed:15960615). Acts as a positive regulator of lateral root formation. Regulated by the auxin response factor and transcriptional activator ARF23/ARF1 (PubMed:15829602). Involved in auxin-mediated cell dedifferentiation, and may promote the initial cell division in the pericycle cells adjacent to the peripheral vascular cylinder at the base of the stem (PubMed:15960615). May act upstream of the gene regulatory network controlling adventitious root (crown) development (PubMed:21806801).</text>
</comment>
<comment type="subunit">
    <text evidence="3">Can form homodimers.</text>
</comment>
<comment type="subcellular location">
    <subcellularLocation>
        <location evidence="3">Nucleus</location>
    </subcellularLocation>
</comment>
<comment type="tissue specificity">
    <text evidence="2 3">Expressed in unelongating basal internodes, at the base of shoot in parenchyma cells adjacent to the peripheral vascular cylinder of the stem, and root pericycle cells (PubMed:15829602). Expressed in lateral and adventitious root primordia, tiller primordia, vascular tissues, scutellum, and young pedicels (PubMed:15960615).</text>
</comment>
<comment type="induction">
    <text evidence="2 3">Induced by auxin (PubMed:15829602, PubMed:15960615). Induced by ethylene (PubMed:15960615).</text>
</comment>
<comment type="disruption phenotype">
    <text evidence="2 3">Defective in adventitious (crown) root formation (PubMed:15829602, PubMed:15960615). Reduced lateral root formation (PubMed:15829602).</text>
</comment>
<comment type="similarity">
    <text evidence="7">Belongs to the LOB domain-containing protein family.</text>
</comment>
<comment type="sequence caution" evidence="7">
    <conflict type="erroneous gene model prediction">
        <sequence resource="EMBL-CDS" id="AAN87738"/>
    </conflict>
</comment>
<accession>Q5UG13</accession>
<accession>Q8H081</accession>
<organism>
    <name type="scientific">Oryza sativa subsp. japonica</name>
    <name type="common">Rice</name>
    <dbReference type="NCBI Taxonomy" id="39947"/>
    <lineage>
        <taxon>Eukaryota</taxon>
        <taxon>Viridiplantae</taxon>
        <taxon>Streptophyta</taxon>
        <taxon>Embryophyta</taxon>
        <taxon>Tracheophyta</taxon>
        <taxon>Spermatophyta</taxon>
        <taxon>Magnoliopsida</taxon>
        <taxon>Liliopsida</taxon>
        <taxon>Poales</taxon>
        <taxon>Poaceae</taxon>
        <taxon>BOP clade</taxon>
        <taxon>Oryzoideae</taxon>
        <taxon>Oryzeae</taxon>
        <taxon>Oryzinae</taxon>
        <taxon>Oryza</taxon>
        <taxon>Oryza sativa</taxon>
    </lineage>
</organism>
<protein>
    <recommendedName>
        <fullName evidence="7">LOB domain-containing protein CRL1</fullName>
    </recommendedName>
    <alternativeName>
        <fullName evidence="6">Protein ADVENTITIOUS ROOTLESS 1</fullName>
        <shortName evidence="6">OsARL1</shortName>
    </alternativeName>
    <alternativeName>
        <fullName evidence="5">Protein CROWN ROOTLESS 1</fullName>
    </alternativeName>
</protein>
<dbReference type="EMBL" id="AB200234">
    <property type="protein sequence ID" value="BAD88523.1"/>
    <property type="molecule type" value="mRNA"/>
</dbReference>
<dbReference type="EMBL" id="AY736375">
    <property type="protein sequence ID" value="AAV49505.1"/>
    <property type="molecule type" value="mRNA"/>
</dbReference>
<dbReference type="EMBL" id="AC105734">
    <property type="protein sequence ID" value="AAN87738.1"/>
    <property type="status" value="ALT_SEQ"/>
    <property type="molecule type" value="Genomic_DNA"/>
</dbReference>
<dbReference type="EMBL" id="DP000009">
    <property type="protein sequence ID" value="ABF93994.1"/>
    <property type="molecule type" value="Genomic_DNA"/>
</dbReference>
<dbReference type="EMBL" id="AP008209">
    <property type="protein sequence ID" value="BAH91996.1"/>
    <property type="molecule type" value="Genomic_DNA"/>
</dbReference>
<dbReference type="EMBL" id="AP014959">
    <property type="protein sequence ID" value="BAS82305.1"/>
    <property type="molecule type" value="Genomic_DNA"/>
</dbReference>
<dbReference type="SMR" id="Q5UG13"/>
<dbReference type="STRING" id="39947.Q5UG13"/>
<dbReference type="PaxDb" id="39947-Q5UG13"/>
<dbReference type="EnsemblPlants" id="Os03t0149100-01">
    <property type="protein sequence ID" value="Os03t0149100-01"/>
    <property type="gene ID" value="Os03g0149100"/>
</dbReference>
<dbReference type="GeneID" id="9271993"/>
<dbReference type="Gramene" id="Os03t0149100-01">
    <property type="protein sequence ID" value="Os03t0149100-01"/>
    <property type="gene ID" value="Os03g0149100"/>
</dbReference>
<dbReference type="KEGG" id="dosa:Os03g0149100"/>
<dbReference type="KEGG" id="osa:9271993"/>
<dbReference type="eggNOG" id="ENOG502QUV3">
    <property type="taxonomic scope" value="Eukaryota"/>
</dbReference>
<dbReference type="HOGENOM" id="CLU_058353_3_0_1"/>
<dbReference type="InParanoid" id="Q5UG13"/>
<dbReference type="OMA" id="YHAFEHA"/>
<dbReference type="OrthoDB" id="668748at2759"/>
<dbReference type="Proteomes" id="UP000000763">
    <property type="component" value="Chromosome 3"/>
</dbReference>
<dbReference type="Proteomes" id="UP000059680">
    <property type="component" value="Chromosome 3"/>
</dbReference>
<dbReference type="GO" id="GO:0005634">
    <property type="term" value="C:nucleus"/>
    <property type="evidence" value="ECO:0000315"/>
    <property type="project" value="UniProtKB"/>
</dbReference>
<dbReference type="GO" id="GO:0042803">
    <property type="term" value="F:protein homodimerization activity"/>
    <property type="evidence" value="ECO:0000353"/>
    <property type="project" value="UniProtKB"/>
</dbReference>
<dbReference type="GO" id="GO:0048830">
    <property type="term" value="P:adventitious root development"/>
    <property type="evidence" value="ECO:0000315"/>
    <property type="project" value="UniProtKB"/>
</dbReference>
<dbReference type="GO" id="GO:0009755">
    <property type="term" value="P:hormone-mediated signaling pathway"/>
    <property type="evidence" value="ECO:0000318"/>
    <property type="project" value="GO_Central"/>
</dbReference>
<dbReference type="GO" id="GO:0010311">
    <property type="term" value="P:lateral root formation"/>
    <property type="evidence" value="ECO:0000315"/>
    <property type="project" value="UniProtKB"/>
</dbReference>
<dbReference type="GO" id="GO:0045893">
    <property type="term" value="P:positive regulation of DNA-templated transcription"/>
    <property type="evidence" value="ECO:0000318"/>
    <property type="project" value="GO_Central"/>
</dbReference>
<dbReference type="InterPro" id="IPR004883">
    <property type="entry name" value="LOB"/>
</dbReference>
<dbReference type="PANTHER" id="PTHR31529">
    <property type="entry name" value="LOB DOMAIN CONTAINING PROTEIN"/>
    <property type="match status" value="1"/>
</dbReference>
<dbReference type="PANTHER" id="PTHR31529:SF26">
    <property type="entry name" value="LOB DOMAIN-CONTAINING PROTEIN CRL1"/>
    <property type="match status" value="1"/>
</dbReference>
<dbReference type="Pfam" id="PF03195">
    <property type="entry name" value="LOB"/>
    <property type="match status" value="1"/>
</dbReference>
<dbReference type="PROSITE" id="PS50891">
    <property type="entry name" value="LOB"/>
    <property type="match status" value="1"/>
</dbReference>
<name>LBD_ORYSJ</name>
<proteinExistence type="evidence at protein level"/>
<gene>
    <name evidence="5" type="primary">CRL1</name>
    <name evidence="6" type="synonym">ARL1</name>
    <name evidence="10" type="ordered locus">Os03g0149100</name>
    <name evidence="9" type="ordered locus">LOC_Os03g05510</name>
    <name evidence="8" type="ORF">OSJNBb0050N02.10</name>
</gene>
<feature type="chain" id="PRO_0000444147" description="LOB domain-containing protein CRL1">
    <location>
        <begin position="1"/>
        <end position="259"/>
    </location>
</feature>
<feature type="domain" description="LOB" evidence="1">
    <location>
        <begin position="6"/>
        <end position="108"/>
    </location>
</feature>
<keyword id="KW-0217">Developmental protein</keyword>
<keyword id="KW-0539">Nucleus</keyword>
<keyword id="KW-1185">Reference proteome</keyword>
<evidence type="ECO:0000255" key="1">
    <source>
        <dbReference type="PROSITE-ProRule" id="PRU00291"/>
    </source>
</evidence>
<evidence type="ECO:0000269" key="2">
    <source>
    </source>
</evidence>
<evidence type="ECO:0000269" key="3">
    <source>
    </source>
</evidence>
<evidence type="ECO:0000269" key="4">
    <source>
    </source>
</evidence>
<evidence type="ECO:0000303" key="5">
    <source>
    </source>
</evidence>
<evidence type="ECO:0000303" key="6">
    <source>
    </source>
</evidence>
<evidence type="ECO:0000305" key="7"/>
<evidence type="ECO:0000312" key="8">
    <source>
        <dbReference type="EMBL" id="AAN87738.1"/>
    </source>
</evidence>
<evidence type="ECO:0000312" key="9">
    <source>
        <dbReference type="EMBL" id="ABF93994.1"/>
    </source>
</evidence>
<evidence type="ECO:0000312" key="10">
    <source>
        <dbReference type="EMBL" id="BAH91996.1"/>
    </source>
</evidence>